<protein>
    <recommendedName>
        <fullName evidence="1">2-oxoglutarate dehydrogenase E1 component</fullName>
        <ecNumber evidence="1">1.2.4.2</ecNumber>
    </recommendedName>
    <alternativeName>
        <fullName evidence="1">Alpha-ketoglutarate dehydrogenase</fullName>
    </alternativeName>
</protein>
<sequence length="1004" mass="112651">MAKQEQAPDRANDVFALTSFLYGGNADYIEELYAKYEDDPNSVDPQWRDFFAKLGDNADDVKKNAEGPSWTRKNWPIAANGELVSALDGNWAEVEKHVADKLKGKAAKGEAKGAAGTPLTAEEITQAARDSVRAIMMIRAYRMRGHLHANLDPLGLAEKPNDYNELEPENYGFTPADYNRKIFIDNVLGLEYATVPEMLDILKRTYCGAIGVEFMHISDPAEKAWIQERIEGPDKKVAFTPEGKKAILSKLIEAEGFEQFIDVKYKGTKRFGLDGGESLIPALEQIVKRGGQMGLKEVVLGMAHRGRLNVLSQVMGKPHRAIFHEFKGGSYTPDDVEGSGDVKYHLGASSDREFDGNKVHLSLTANPSHLEIVNPVVMGKARAKQDLLVGRTRDDMVPLSERAKVLPLLLHGDAAFAGQGVVAECLGLSGLKGHRVAGTLHFIINNQIGFTTNPAFSRSSPYPSDVAKMIEAPIFHVNGDDPEAVVFAAKVATEFRMTFHKPVVIDMFCYRRFGHNEGDEPSFTQPLMYKAIRAHKTTVQLYGEKLIAEGLVTQDDIDRMKADWRQKLEGEFEAGQSYKPNKADWLDGAWAGLRTADNADEQRRGKTAVPVKTLKEIGKKLVEVPKDFHVHRTIQRFLDNRAKMMETGEGIDWATAESLAFGSLAVEGHPIRLSGQDVERGTFSQRHTVLYDQENQNRYIPLNNLQKGQAIYEAINSMLSEEAVLGYEYGYSLSDPRALVLWEAQFGDFANGAQVVFDQFISSGERKWLRMSGLVCLLPHGFEGQGPEHSSARLERYLQLCAEDNMQVANVTTPANYFHILRRQMKRDFRKPLIMMTPKSLLRHKRAISTLAELSGESSFHRLLWDDAQYNKDEGIKLQKDAKIRRVVLCSGKVYYDLYEEREKRGIDDVYLLRVEQLYPFPAKALINELSRFRHAEMVWCQEEPKNMGAWSFIDPYLEWVLAHIDAKHQRVRYAGRPAAASPATGLMSKHLAQLAAFLEDALG</sequence>
<evidence type="ECO:0000255" key="1">
    <source>
        <dbReference type="HAMAP-Rule" id="MF_01169"/>
    </source>
</evidence>
<dbReference type="EC" id="1.2.4.2" evidence="1"/>
<dbReference type="EMBL" id="CP000872">
    <property type="protein sequence ID" value="ABX62957.1"/>
    <property type="molecule type" value="Genomic_DNA"/>
</dbReference>
<dbReference type="RefSeq" id="WP_004692111.1">
    <property type="nucleotide sequence ID" value="NC_010103.1"/>
</dbReference>
<dbReference type="SMR" id="A9M8Q9"/>
<dbReference type="GeneID" id="55591514"/>
<dbReference type="KEGG" id="bcs:BCAN_A1967"/>
<dbReference type="HOGENOM" id="CLU_004709_1_0_5"/>
<dbReference type="PhylomeDB" id="A9M8Q9"/>
<dbReference type="Proteomes" id="UP000001385">
    <property type="component" value="Chromosome I"/>
</dbReference>
<dbReference type="GO" id="GO:0005829">
    <property type="term" value="C:cytosol"/>
    <property type="evidence" value="ECO:0007669"/>
    <property type="project" value="TreeGrafter"/>
</dbReference>
<dbReference type="GO" id="GO:0045252">
    <property type="term" value="C:oxoglutarate dehydrogenase complex"/>
    <property type="evidence" value="ECO:0007669"/>
    <property type="project" value="TreeGrafter"/>
</dbReference>
<dbReference type="GO" id="GO:0004591">
    <property type="term" value="F:oxoglutarate dehydrogenase (succinyl-transferring) activity"/>
    <property type="evidence" value="ECO:0007669"/>
    <property type="project" value="UniProtKB-UniRule"/>
</dbReference>
<dbReference type="GO" id="GO:0030976">
    <property type="term" value="F:thiamine pyrophosphate binding"/>
    <property type="evidence" value="ECO:0007669"/>
    <property type="project" value="UniProtKB-UniRule"/>
</dbReference>
<dbReference type="GO" id="GO:0006096">
    <property type="term" value="P:glycolytic process"/>
    <property type="evidence" value="ECO:0007669"/>
    <property type="project" value="UniProtKB-UniRule"/>
</dbReference>
<dbReference type="GO" id="GO:0006099">
    <property type="term" value="P:tricarboxylic acid cycle"/>
    <property type="evidence" value="ECO:0007669"/>
    <property type="project" value="TreeGrafter"/>
</dbReference>
<dbReference type="CDD" id="cd02016">
    <property type="entry name" value="TPP_E1_OGDC_like"/>
    <property type="match status" value="1"/>
</dbReference>
<dbReference type="FunFam" id="3.40.50.12470:FF:000003">
    <property type="entry name" value="2-oxoglutarate dehydrogenase E1 component"/>
    <property type="match status" value="1"/>
</dbReference>
<dbReference type="Gene3D" id="3.40.50.12470">
    <property type="match status" value="1"/>
</dbReference>
<dbReference type="Gene3D" id="3.40.50.970">
    <property type="match status" value="1"/>
</dbReference>
<dbReference type="Gene3D" id="3.40.50.11610">
    <property type="entry name" value="Multifunctional 2-oxoglutarate metabolism enzyme, C-terminal domain"/>
    <property type="match status" value="1"/>
</dbReference>
<dbReference type="Gene3D" id="1.10.287.1150">
    <property type="entry name" value="TPP helical domain"/>
    <property type="match status" value="1"/>
</dbReference>
<dbReference type="HAMAP" id="MF_01169">
    <property type="entry name" value="SucA_OdhA"/>
    <property type="match status" value="1"/>
</dbReference>
<dbReference type="InterPro" id="IPR032106">
    <property type="entry name" value="2-oxogl_dehyd_N"/>
</dbReference>
<dbReference type="InterPro" id="IPR011603">
    <property type="entry name" value="2oxoglutarate_DH_E1"/>
</dbReference>
<dbReference type="InterPro" id="IPR023784">
    <property type="entry name" value="2oxoglutarate_DH_E1_bac"/>
</dbReference>
<dbReference type="InterPro" id="IPR001017">
    <property type="entry name" value="DH_E1"/>
</dbReference>
<dbReference type="InterPro" id="IPR042179">
    <property type="entry name" value="KGD_C_sf"/>
</dbReference>
<dbReference type="InterPro" id="IPR031717">
    <property type="entry name" value="ODO-1/KGD_C"/>
</dbReference>
<dbReference type="InterPro" id="IPR029061">
    <property type="entry name" value="THDP-binding"/>
</dbReference>
<dbReference type="InterPro" id="IPR005475">
    <property type="entry name" value="Transketolase-like_Pyr-bd"/>
</dbReference>
<dbReference type="NCBIfam" id="TIGR00239">
    <property type="entry name" value="2oxo_dh_E1"/>
    <property type="match status" value="1"/>
</dbReference>
<dbReference type="NCBIfam" id="NF006914">
    <property type="entry name" value="PRK09404.1"/>
    <property type="match status" value="1"/>
</dbReference>
<dbReference type="NCBIfam" id="NF008907">
    <property type="entry name" value="PRK12270.1"/>
    <property type="match status" value="1"/>
</dbReference>
<dbReference type="PANTHER" id="PTHR23152:SF4">
    <property type="entry name" value="2-OXOADIPATE DEHYDROGENASE COMPLEX COMPONENT E1"/>
    <property type="match status" value="1"/>
</dbReference>
<dbReference type="PANTHER" id="PTHR23152">
    <property type="entry name" value="2-OXOGLUTARATE DEHYDROGENASE"/>
    <property type="match status" value="1"/>
</dbReference>
<dbReference type="Pfam" id="PF16078">
    <property type="entry name" value="2-oxogl_dehyd_N"/>
    <property type="match status" value="1"/>
</dbReference>
<dbReference type="Pfam" id="PF00676">
    <property type="entry name" value="E1_dh"/>
    <property type="match status" value="1"/>
</dbReference>
<dbReference type="Pfam" id="PF16870">
    <property type="entry name" value="OxoGdeHyase_C"/>
    <property type="match status" value="1"/>
</dbReference>
<dbReference type="Pfam" id="PF02779">
    <property type="entry name" value="Transket_pyr"/>
    <property type="match status" value="1"/>
</dbReference>
<dbReference type="PIRSF" id="PIRSF000157">
    <property type="entry name" value="Oxoglu_dh_E1"/>
    <property type="match status" value="1"/>
</dbReference>
<dbReference type="SMART" id="SM00861">
    <property type="entry name" value="Transket_pyr"/>
    <property type="match status" value="1"/>
</dbReference>
<dbReference type="SUPFAM" id="SSF52518">
    <property type="entry name" value="Thiamin diphosphate-binding fold (THDP-binding)"/>
    <property type="match status" value="2"/>
</dbReference>
<comment type="function">
    <text evidence="1">E1 component of the 2-oxoglutarate dehydrogenase (OGDH) complex which catalyzes the decarboxylation of 2-oxoglutarate, the first step in the conversion of 2-oxoglutarate to succinyl-CoA and CO(2).</text>
</comment>
<comment type="catalytic activity">
    <reaction evidence="1">
        <text>N(6)-[(R)-lipoyl]-L-lysyl-[protein] + 2-oxoglutarate + H(+) = N(6)-[(R)-S(8)-succinyldihydrolipoyl]-L-lysyl-[protein] + CO2</text>
        <dbReference type="Rhea" id="RHEA:12188"/>
        <dbReference type="Rhea" id="RHEA-COMP:10474"/>
        <dbReference type="Rhea" id="RHEA-COMP:20092"/>
        <dbReference type="ChEBI" id="CHEBI:15378"/>
        <dbReference type="ChEBI" id="CHEBI:16526"/>
        <dbReference type="ChEBI" id="CHEBI:16810"/>
        <dbReference type="ChEBI" id="CHEBI:83099"/>
        <dbReference type="ChEBI" id="CHEBI:83120"/>
        <dbReference type="EC" id="1.2.4.2"/>
    </reaction>
</comment>
<comment type="cofactor">
    <cofactor evidence="1">
        <name>thiamine diphosphate</name>
        <dbReference type="ChEBI" id="CHEBI:58937"/>
    </cofactor>
</comment>
<comment type="subunit">
    <text evidence="1">Homodimer. Part of the 2-oxoglutarate dehydrogenase (OGDH) complex composed of E1 (2-oxoglutarate dehydrogenase), E2 (dihydrolipoamide succinyltransferase) and E3 (dihydrolipoamide dehydrogenase); the complex contains multiple copies of the three enzymatic components (E1, E2 and E3).</text>
</comment>
<comment type="similarity">
    <text evidence="1">Belongs to the alpha-ketoglutarate dehydrogenase family.</text>
</comment>
<keyword id="KW-0324">Glycolysis</keyword>
<keyword id="KW-0560">Oxidoreductase</keyword>
<keyword id="KW-1185">Reference proteome</keyword>
<keyword id="KW-0786">Thiamine pyrophosphate</keyword>
<reference key="1">
    <citation type="submission" date="2007-10" db="EMBL/GenBank/DDBJ databases">
        <title>Brucella canis ATCC 23365 whole genome shotgun sequencing project.</title>
        <authorList>
            <person name="Setubal J.C."/>
            <person name="Bowns C."/>
            <person name="Boyle S."/>
            <person name="Crasta O.R."/>
            <person name="Czar M.J."/>
            <person name="Dharmanolla C."/>
            <person name="Gillespie J.J."/>
            <person name="Kenyon R.W."/>
            <person name="Lu J."/>
            <person name="Mane S."/>
            <person name="Mohapatra S."/>
            <person name="Nagrani S."/>
            <person name="Purkayastha A."/>
            <person name="Rajasimha H.K."/>
            <person name="Shallom J.M."/>
            <person name="Shallom S."/>
            <person name="Shukla M."/>
            <person name="Snyder E.E."/>
            <person name="Sobral B.W."/>
            <person name="Wattam A.R."/>
            <person name="Will R."/>
            <person name="Williams K."/>
            <person name="Yoo H."/>
            <person name="Bruce D."/>
            <person name="Detter C."/>
            <person name="Munk C."/>
            <person name="Brettin T.S."/>
        </authorList>
    </citation>
    <scope>NUCLEOTIDE SEQUENCE [LARGE SCALE GENOMIC DNA]</scope>
    <source>
        <strain>ATCC 23365 / NCTC 10854 / RM-666</strain>
    </source>
</reference>
<feature type="chain" id="PRO_1000085385" description="2-oxoglutarate dehydrogenase E1 component">
    <location>
        <begin position="1"/>
        <end position="1004"/>
    </location>
</feature>
<accession>A9M8Q9</accession>
<organism>
    <name type="scientific">Brucella canis (strain ATCC 23365 / NCTC 10854 / RM-666)</name>
    <dbReference type="NCBI Taxonomy" id="483179"/>
    <lineage>
        <taxon>Bacteria</taxon>
        <taxon>Pseudomonadati</taxon>
        <taxon>Pseudomonadota</taxon>
        <taxon>Alphaproteobacteria</taxon>
        <taxon>Hyphomicrobiales</taxon>
        <taxon>Brucellaceae</taxon>
        <taxon>Brucella/Ochrobactrum group</taxon>
        <taxon>Brucella</taxon>
    </lineage>
</organism>
<proteinExistence type="inferred from homology"/>
<gene>
    <name evidence="1" type="primary">sucA</name>
    <name evidence="1" type="synonym">odhA</name>
    <name type="ordered locus">BCAN_A1967</name>
</gene>
<name>ODO1_BRUC2</name>